<dbReference type="EC" id="1.8.4.12" evidence="1"/>
<dbReference type="EMBL" id="CP000036">
    <property type="protein sequence ID" value="ABB65944.1"/>
    <property type="molecule type" value="Genomic_DNA"/>
</dbReference>
<dbReference type="RefSeq" id="WP_001284613.1">
    <property type="nucleotide sequence ID" value="NC_007613.1"/>
</dbReference>
<dbReference type="SMR" id="Q321R4"/>
<dbReference type="KEGG" id="sbo:SBO_1317"/>
<dbReference type="HOGENOM" id="CLU_031040_8_5_6"/>
<dbReference type="Proteomes" id="UP000007067">
    <property type="component" value="Chromosome"/>
</dbReference>
<dbReference type="GO" id="GO:0005737">
    <property type="term" value="C:cytoplasm"/>
    <property type="evidence" value="ECO:0007669"/>
    <property type="project" value="TreeGrafter"/>
</dbReference>
<dbReference type="GO" id="GO:0033743">
    <property type="term" value="F:peptide-methionine (R)-S-oxide reductase activity"/>
    <property type="evidence" value="ECO:0007669"/>
    <property type="project" value="UniProtKB-UniRule"/>
</dbReference>
<dbReference type="GO" id="GO:0008270">
    <property type="term" value="F:zinc ion binding"/>
    <property type="evidence" value="ECO:0007669"/>
    <property type="project" value="UniProtKB-UniRule"/>
</dbReference>
<dbReference type="GO" id="GO:0030091">
    <property type="term" value="P:protein repair"/>
    <property type="evidence" value="ECO:0007669"/>
    <property type="project" value="InterPro"/>
</dbReference>
<dbReference type="GO" id="GO:0006979">
    <property type="term" value="P:response to oxidative stress"/>
    <property type="evidence" value="ECO:0007669"/>
    <property type="project" value="InterPro"/>
</dbReference>
<dbReference type="FunFam" id="2.170.150.20:FF:000001">
    <property type="entry name" value="Peptide methionine sulfoxide reductase MsrB"/>
    <property type="match status" value="1"/>
</dbReference>
<dbReference type="Gene3D" id="2.170.150.20">
    <property type="entry name" value="Peptide methionine sulfoxide reductase"/>
    <property type="match status" value="1"/>
</dbReference>
<dbReference type="HAMAP" id="MF_01400">
    <property type="entry name" value="MsrB"/>
    <property type="match status" value="1"/>
</dbReference>
<dbReference type="InterPro" id="IPR028427">
    <property type="entry name" value="Met_Sox_Rdtase_MsrB"/>
</dbReference>
<dbReference type="InterPro" id="IPR002579">
    <property type="entry name" value="Met_Sox_Rdtase_MsrB_dom"/>
</dbReference>
<dbReference type="InterPro" id="IPR011057">
    <property type="entry name" value="Mss4-like_sf"/>
</dbReference>
<dbReference type="NCBIfam" id="TIGR00357">
    <property type="entry name" value="peptide-methionine (R)-S-oxide reductase MsrB"/>
    <property type="match status" value="1"/>
</dbReference>
<dbReference type="PANTHER" id="PTHR10173">
    <property type="entry name" value="METHIONINE SULFOXIDE REDUCTASE"/>
    <property type="match status" value="1"/>
</dbReference>
<dbReference type="PANTHER" id="PTHR10173:SF52">
    <property type="entry name" value="METHIONINE-R-SULFOXIDE REDUCTASE B1"/>
    <property type="match status" value="1"/>
</dbReference>
<dbReference type="Pfam" id="PF01641">
    <property type="entry name" value="SelR"/>
    <property type="match status" value="1"/>
</dbReference>
<dbReference type="SUPFAM" id="SSF51316">
    <property type="entry name" value="Mss4-like"/>
    <property type="match status" value="1"/>
</dbReference>
<dbReference type="PROSITE" id="PS51790">
    <property type="entry name" value="MSRB"/>
    <property type="match status" value="1"/>
</dbReference>
<feature type="chain" id="PRO_1000068291" description="Peptide methionine sulfoxide reductase MsrB">
    <location>
        <begin position="1"/>
        <end position="137"/>
    </location>
</feature>
<feature type="domain" description="MsrB" evidence="2">
    <location>
        <begin position="7"/>
        <end position="129"/>
    </location>
</feature>
<feature type="active site" description="Nucleophile" evidence="2">
    <location>
        <position position="118"/>
    </location>
</feature>
<feature type="binding site" evidence="2">
    <location>
        <position position="46"/>
    </location>
    <ligand>
        <name>Zn(2+)</name>
        <dbReference type="ChEBI" id="CHEBI:29105"/>
    </ligand>
</feature>
<feature type="binding site" evidence="2">
    <location>
        <position position="49"/>
    </location>
    <ligand>
        <name>Zn(2+)</name>
        <dbReference type="ChEBI" id="CHEBI:29105"/>
    </ligand>
</feature>
<feature type="binding site" evidence="2">
    <location>
        <position position="95"/>
    </location>
    <ligand>
        <name>Zn(2+)</name>
        <dbReference type="ChEBI" id="CHEBI:29105"/>
    </ligand>
</feature>
<feature type="binding site" evidence="2">
    <location>
        <position position="98"/>
    </location>
    <ligand>
        <name>Zn(2+)</name>
        <dbReference type="ChEBI" id="CHEBI:29105"/>
    </ligand>
</feature>
<comment type="catalytic activity">
    <reaction evidence="1">
        <text>L-methionyl-[protein] + [thioredoxin]-disulfide + H2O = L-methionyl-(R)-S-oxide-[protein] + [thioredoxin]-dithiol</text>
        <dbReference type="Rhea" id="RHEA:24164"/>
        <dbReference type="Rhea" id="RHEA-COMP:10698"/>
        <dbReference type="Rhea" id="RHEA-COMP:10700"/>
        <dbReference type="Rhea" id="RHEA-COMP:12313"/>
        <dbReference type="Rhea" id="RHEA-COMP:12314"/>
        <dbReference type="ChEBI" id="CHEBI:15377"/>
        <dbReference type="ChEBI" id="CHEBI:16044"/>
        <dbReference type="ChEBI" id="CHEBI:29950"/>
        <dbReference type="ChEBI" id="CHEBI:45764"/>
        <dbReference type="ChEBI" id="CHEBI:50058"/>
        <dbReference type="EC" id="1.8.4.12"/>
    </reaction>
</comment>
<comment type="cofactor">
    <cofactor evidence="1">
        <name>Zn(2+)</name>
        <dbReference type="ChEBI" id="CHEBI:29105"/>
    </cofactor>
    <text evidence="1">Binds 1 zinc ion per subunit. The zinc ion is important for the structural integrity of the protein.</text>
</comment>
<comment type="similarity">
    <text evidence="1">Belongs to the MsrB Met sulfoxide reductase family.</text>
</comment>
<gene>
    <name evidence="1" type="primary">msrB</name>
    <name type="ordered locus">SBO_1317</name>
</gene>
<evidence type="ECO:0000255" key="1">
    <source>
        <dbReference type="HAMAP-Rule" id="MF_01400"/>
    </source>
</evidence>
<evidence type="ECO:0000255" key="2">
    <source>
        <dbReference type="PROSITE-ProRule" id="PRU01126"/>
    </source>
</evidence>
<sequence>MANKPSAEELKKNLSEMQFYVTQNHGTEPPFTGRLLHNKRDGVYHCLICDAPLFHSETKYDSGCGWPSFYEPVSEESIRYIKDLSHGMQRIEIRCGNCDAHLGHVFPDGPQPTGERYCVNSASLRFTDGENGEEING</sequence>
<accession>Q321R4</accession>
<keyword id="KW-0479">Metal-binding</keyword>
<keyword id="KW-0560">Oxidoreductase</keyword>
<keyword id="KW-0862">Zinc</keyword>
<organism>
    <name type="scientific">Shigella boydii serotype 4 (strain Sb227)</name>
    <dbReference type="NCBI Taxonomy" id="300268"/>
    <lineage>
        <taxon>Bacteria</taxon>
        <taxon>Pseudomonadati</taxon>
        <taxon>Pseudomonadota</taxon>
        <taxon>Gammaproteobacteria</taxon>
        <taxon>Enterobacterales</taxon>
        <taxon>Enterobacteriaceae</taxon>
        <taxon>Shigella</taxon>
    </lineage>
</organism>
<name>MSRB_SHIBS</name>
<protein>
    <recommendedName>
        <fullName evidence="1">Peptide methionine sulfoxide reductase MsrB</fullName>
        <ecNumber evidence="1">1.8.4.12</ecNumber>
    </recommendedName>
    <alternativeName>
        <fullName evidence="1">Peptide-methionine (R)-S-oxide reductase</fullName>
    </alternativeName>
</protein>
<proteinExistence type="inferred from homology"/>
<reference key="1">
    <citation type="journal article" date="2005" name="Nucleic Acids Res.">
        <title>Genome dynamics and diversity of Shigella species, the etiologic agents of bacillary dysentery.</title>
        <authorList>
            <person name="Yang F."/>
            <person name="Yang J."/>
            <person name="Zhang X."/>
            <person name="Chen L."/>
            <person name="Jiang Y."/>
            <person name="Yan Y."/>
            <person name="Tang X."/>
            <person name="Wang J."/>
            <person name="Xiong Z."/>
            <person name="Dong J."/>
            <person name="Xue Y."/>
            <person name="Zhu Y."/>
            <person name="Xu X."/>
            <person name="Sun L."/>
            <person name="Chen S."/>
            <person name="Nie H."/>
            <person name="Peng J."/>
            <person name="Xu J."/>
            <person name="Wang Y."/>
            <person name="Yuan Z."/>
            <person name="Wen Y."/>
            <person name="Yao Z."/>
            <person name="Shen Y."/>
            <person name="Qiang B."/>
            <person name="Hou Y."/>
            <person name="Yu J."/>
            <person name="Jin Q."/>
        </authorList>
    </citation>
    <scope>NUCLEOTIDE SEQUENCE [LARGE SCALE GENOMIC DNA]</scope>
    <source>
        <strain>Sb227</strain>
    </source>
</reference>